<evidence type="ECO:0000255" key="1">
    <source>
        <dbReference type="HAMAP-Rule" id="MF_00001"/>
    </source>
</evidence>
<dbReference type="EC" id="2.1.3.2" evidence="1"/>
<dbReference type="EMBL" id="CP000031">
    <property type="protein sequence ID" value="AAV93605.1"/>
    <property type="molecule type" value="Genomic_DNA"/>
</dbReference>
<dbReference type="RefSeq" id="WP_011046048.1">
    <property type="nucleotide sequence ID" value="NC_003911.12"/>
</dbReference>
<dbReference type="SMR" id="Q5LX75"/>
<dbReference type="STRING" id="246200.SPO0287"/>
<dbReference type="PaxDb" id="246200-SPO0287"/>
<dbReference type="KEGG" id="sil:SPO0287"/>
<dbReference type="eggNOG" id="COG0540">
    <property type="taxonomic scope" value="Bacteria"/>
</dbReference>
<dbReference type="HOGENOM" id="CLU_043846_2_0_5"/>
<dbReference type="OrthoDB" id="9774690at2"/>
<dbReference type="UniPathway" id="UPA00070">
    <property type="reaction ID" value="UER00116"/>
</dbReference>
<dbReference type="Proteomes" id="UP000001023">
    <property type="component" value="Chromosome"/>
</dbReference>
<dbReference type="GO" id="GO:0005829">
    <property type="term" value="C:cytosol"/>
    <property type="evidence" value="ECO:0007669"/>
    <property type="project" value="TreeGrafter"/>
</dbReference>
<dbReference type="GO" id="GO:0016597">
    <property type="term" value="F:amino acid binding"/>
    <property type="evidence" value="ECO:0007669"/>
    <property type="project" value="InterPro"/>
</dbReference>
<dbReference type="GO" id="GO:0004070">
    <property type="term" value="F:aspartate carbamoyltransferase activity"/>
    <property type="evidence" value="ECO:0007669"/>
    <property type="project" value="UniProtKB-UniRule"/>
</dbReference>
<dbReference type="GO" id="GO:0006207">
    <property type="term" value="P:'de novo' pyrimidine nucleobase biosynthetic process"/>
    <property type="evidence" value="ECO:0007669"/>
    <property type="project" value="InterPro"/>
</dbReference>
<dbReference type="GO" id="GO:0044205">
    <property type="term" value="P:'de novo' UMP biosynthetic process"/>
    <property type="evidence" value="ECO:0007669"/>
    <property type="project" value="UniProtKB-UniRule"/>
</dbReference>
<dbReference type="GO" id="GO:0006520">
    <property type="term" value="P:amino acid metabolic process"/>
    <property type="evidence" value="ECO:0007669"/>
    <property type="project" value="InterPro"/>
</dbReference>
<dbReference type="FunFam" id="3.40.50.1370:FF:000007">
    <property type="entry name" value="Aspartate carbamoyltransferase"/>
    <property type="match status" value="1"/>
</dbReference>
<dbReference type="Gene3D" id="3.40.50.1370">
    <property type="entry name" value="Aspartate/ornithine carbamoyltransferase"/>
    <property type="match status" value="2"/>
</dbReference>
<dbReference type="HAMAP" id="MF_00001">
    <property type="entry name" value="Asp_carb_tr"/>
    <property type="match status" value="1"/>
</dbReference>
<dbReference type="InterPro" id="IPR006132">
    <property type="entry name" value="Asp/Orn_carbamoyltranf_P-bd"/>
</dbReference>
<dbReference type="InterPro" id="IPR006130">
    <property type="entry name" value="Asp/Orn_carbamoylTrfase"/>
</dbReference>
<dbReference type="InterPro" id="IPR036901">
    <property type="entry name" value="Asp/Orn_carbamoylTrfase_sf"/>
</dbReference>
<dbReference type="InterPro" id="IPR002082">
    <property type="entry name" value="Asp_carbamoyltransf"/>
</dbReference>
<dbReference type="InterPro" id="IPR006131">
    <property type="entry name" value="Asp_carbamoyltransf_Asp/Orn-bd"/>
</dbReference>
<dbReference type="NCBIfam" id="TIGR00670">
    <property type="entry name" value="asp_carb_tr"/>
    <property type="match status" value="1"/>
</dbReference>
<dbReference type="NCBIfam" id="NF002032">
    <property type="entry name" value="PRK00856.1"/>
    <property type="match status" value="1"/>
</dbReference>
<dbReference type="PANTHER" id="PTHR45753:SF6">
    <property type="entry name" value="ASPARTATE CARBAMOYLTRANSFERASE"/>
    <property type="match status" value="1"/>
</dbReference>
<dbReference type="PANTHER" id="PTHR45753">
    <property type="entry name" value="ORNITHINE CARBAMOYLTRANSFERASE, MITOCHONDRIAL"/>
    <property type="match status" value="1"/>
</dbReference>
<dbReference type="Pfam" id="PF00185">
    <property type="entry name" value="OTCace"/>
    <property type="match status" value="1"/>
</dbReference>
<dbReference type="Pfam" id="PF02729">
    <property type="entry name" value="OTCace_N"/>
    <property type="match status" value="1"/>
</dbReference>
<dbReference type="PRINTS" id="PR00100">
    <property type="entry name" value="AOTCASE"/>
</dbReference>
<dbReference type="PRINTS" id="PR00101">
    <property type="entry name" value="ATCASE"/>
</dbReference>
<dbReference type="SUPFAM" id="SSF53671">
    <property type="entry name" value="Aspartate/ornithine carbamoyltransferase"/>
    <property type="match status" value="1"/>
</dbReference>
<dbReference type="PROSITE" id="PS00097">
    <property type="entry name" value="CARBAMOYLTRANSFERASE"/>
    <property type="match status" value="1"/>
</dbReference>
<gene>
    <name evidence="1" type="primary">pyrB</name>
    <name type="ordered locus">SPO0287</name>
</gene>
<comment type="function">
    <text evidence="1">Catalyzes the condensation of carbamoyl phosphate and aspartate to form carbamoyl aspartate and inorganic phosphate, the committed step in the de novo pyrimidine nucleotide biosynthesis pathway.</text>
</comment>
<comment type="catalytic activity">
    <reaction evidence="1">
        <text>carbamoyl phosphate + L-aspartate = N-carbamoyl-L-aspartate + phosphate + H(+)</text>
        <dbReference type="Rhea" id="RHEA:20013"/>
        <dbReference type="ChEBI" id="CHEBI:15378"/>
        <dbReference type="ChEBI" id="CHEBI:29991"/>
        <dbReference type="ChEBI" id="CHEBI:32814"/>
        <dbReference type="ChEBI" id="CHEBI:43474"/>
        <dbReference type="ChEBI" id="CHEBI:58228"/>
        <dbReference type="EC" id="2.1.3.2"/>
    </reaction>
</comment>
<comment type="pathway">
    <text evidence="1">Pyrimidine metabolism; UMP biosynthesis via de novo pathway; (S)-dihydroorotate from bicarbonate: step 2/3.</text>
</comment>
<comment type="subunit">
    <text evidence="1">Heterododecamer (2C3:3R2) of six catalytic PyrB chains organized as two trimers (C3), and six regulatory PyrI chains organized as three dimers (R2).</text>
</comment>
<comment type="similarity">
    <text evidence="1">Belongs to the aspartate/ornithine carbamoyltransferase superfamily. ATCase family.</text>
</comment>
<protein>
    <recommendedName>
        <fullName evidence="1">Aspartate carbamoyltransferase catalytic subunit</fullName>
        <ecNumber evidence="1">2.1.3.2</ecNumber>
    </recommendedName>
    <alternativeName>
        <fullName evidence="1">Aspartate transcarbamylase</fullName>
        <shortName evidence="1">ATCase</shortName>
    </alternativeName>
</protein>
<reference key="1">
    <citation type="journal article" date="2004" name="Nature">
        <title>Genome sequence of Silicibacter pomeroyi reveals adaptations to the marine environment.</title>
        <authorList>
            <person name="Moran M.A."/>
            <person name="Buchan A."/>
            <person name="Gonzalez J.M."/>
            <person name="Heidelberg J.F."/>
            <person name="Whitman W.B."/>
            <person name="Kiene R.P."/>
            <person name="Henriksen J.R."/>
            <person name="King G.M."/>
            <person name="Belas R."/>
            <person name="Fuqua C."/>
            <person name="Brinkac L.M."/>
            <person name="Lewis M."/>
            <person name="Johri S."/>
            <person name="Weaver B."/>
            <person name="Pai G."/>
            <person name="Eisen J.A."/>
            <person name="Rahe E."/>
            <person name="Sheldon W.M."/>
            <person name="Ye W."/>
            <person name="Miller T.R."/>
            <person name="Carlton J."/>
            <person name="Rasko D.A."/>
            <person name="Paulsen I.T."/>
            <person name="Ren Q."/>
            <person name="Daugherty S.C."/>
            <person name="DeBoy R.T."/>
            <person name="Dodson R.J."/>
            <person name="Durkin A.S."/>
            <person name="Madupu R."/>
            <person name="Nelson W.C."/>
            <person name="Sullivan S.A."/>
            <person name="Rosovitz M.J."/>
            <person name="Haft D.H."/>
            <person name="Selengut J."/>
            <person name="Ward N."/>
        </authorList>
    </citation>
    <scope>NUCLEOTIDE SEQUENCE [LARGE SCALE GENOMIC DNA]</scope>
    <source>
        <strain>ATCC 700808 / DSM 15171 / DSS-3</strain>
    </source>
</reference>
<reference key="2">
    <citation type="journal article" date="2014" name="Stand. Genomic Sci.">
        <title>An updated genome annotation for the model marine bacterium Ruegeria pomeroyi DSS-3.</title>
        <authorList>
            <person name="Rivers A.R."/>
            <person name="Smith C.B."/>
            <person name="Moran M.A."/>
        </authorList>
    </citation>
    <scope>GENOME REANNOTATION</scope>
    <source>
        <strain>ATCC 700808 / DSM 15171 / DSS-3</strain>
    </source>
</reference>
<name>PYRB_RUEPO</name>
<feature type="chain" id="PRO_0000113192" description="Aspartate carbamoyltransferase catalytic subunit">
    <location>
        <begin position="1"/>
        <end position="311"/>
    </location>
</feature>
<feature type="binding site" evidence="1">
    <location>
        <position position="58"/>
    </location>
    <ligand>
        <name>carbamoyl phosphate</name>
        <dbReference type="ChEBI" id="CHEBI:58228"/>
    </ligand>
</feature>
<feature type="binding site" evidence="1">
    <location>
        <position position="59"/>
    </location>
    <ligand>
        <name>carbamoyl phosphate</name>
        <dbReference type="ChEBI" id="CHEBI:58228"/>
    </ligand>
</feature>
<feature type="binding site" evidence="1">
    <location>
        <position position="86"/>
    </location>
    <ligand>
        <name>L-aspartate</name>
        <dbReference type="ChEBI" id="CHEBI:29991"/>
    </ligand>
</feature>
<feature type="binding site" evidence="1">
    <location>
        <position position="108"/>
    </location>
    <ligand>
        <name>carbamoyl phosphate</name>
        <dbReference type="ChEBI" id="CHEBI:58228"/>
    </ligand>
</feature>
<feature type="binding site" evidence="1">
    <location>
        <position position="136"/>
    </location>
    <ligand>
        <name>carbamoyl phosphate</name>
        <dbReference type="ChEBI" id="CHEBI:58228"/>
    </ligand>
</feature>
<feature type="binding site" evidence="1">
    <location>
        <position position="139"/>
    </location>
    <ligand>
        <name>carbamoyl phosphate</name>
        <dbReference type="ChEBI" id="CHEBI:58228"/>
    </ligand>
</feature>
<feature type="binding site" evidence="1">
    <location>
        <position position="169"/>
    </location>
    <ligand>
        <name>L-aspartate</name>
        <dbReference type="ChEBI" id="CHEBI:29991"/>
    </ligand>
</feature>
<feature type="binding site" evidence="1">
    <location>
        <position position="223"/>
    </location>
    <ligand>
        <name>L-aspartate</name>
        <dbReference type="ChEBI" id="CHEBI:29991"/>
    </ligand>
</feature>
<feature type="binding site" evidence="1">
    <location>
        <position position="264"/>
    </location>
    <ligand>
        <name>carbamoyl phosphate</name>
        <dbReference type="ChEBI" id="CHEBI:58228"/>
    </ligand>
</feature>
<feature type="binding site" evidence="1">
    <location>
        <position position="265"/>
    </location>
    <ligand>
        <name>carbamoyl phosphate</name>
        <dbReference type="ChEBI" id="CHEBI:58228"/>
    </ligand>
</feature>
<keyword id="KW-0665">Pyrimidine biosynthesis</keyword>
<keyword id="KW-1185">Reference proteome</keyword>
<keyword id="KW-0808">Transferase</keyword>
<organism>
    <name type="scientific">Ruegeria pomeroyi (strain ATCC 700808 / DSM 15171 / DSS-3)</name>
    <name type="common">Silicibacter pomeroyi</name>
    <dbReference type="NCBI Taxonomy" id="246200"/>
    <lineage>
        <taxon>Bacteria</taxon>
        <taxon>Pseudomonadati</taxon>
        <taxon>Pseudomonadota</taxon>
        <taxon>Alphaproteobacteria</taxon>
        <taxon>Rhodobacterales</taxon>
        <taxon>Roseobacteraceae</taxon>
        <taxon>Ruegeria</taxon>
    </lineage>
</organism>
<sequence length="311" mass="34433">MSFAHRHLLGIEQLSPADITAILDLAETYVALNRQSAKHSDVLSGLTQINMFFENSTRTQASFELAGKRLGADVMNMSMQASSIKKGETLIDTAMTLNAMHPDLLVVRHPHSGAVDLLAQKVNCAVLNAGDGRHEHPTQALLDALTIRRAKGRLHRLNIAICGDIAHSRVARSNLILLGKMENRIRLIGPPTLVPAQFAEFGAEVYDDMREGLKDVDVVMMLRLQRERMDGGFIPSEREYYHRYGLDREKLGLAKPDAIVMHPGPMNRGVEIDGTLADDINRSVIQEQVEMGVAVRMAAMELLARNLREAT</sequence>
<proteinExistence type="inferred from homology"/>
<accession>Q5LX75</accession>